<protein>
    <recommendedName>
        <fullName evidence="1">Transcription elongation factor GreA</fullName>
    </recommendedName>
    <alternativeName>
        <fullName evidence="1">Transcript cleavage factor GreA</fullName>
    </alternativeName>
</protein>
<keyword id="KW-0175">Coiled coil</keyword>
<keyword id="KW-0238">DNA-binding</keyword>
<keyword id="KW-0804">Transcription</keyword>
<keyword id="KW-0805">Transcription regulation</keyword>
<evidence type="ECO:0000255" key="1">
    <source>
        <dbReference type="HAMAP-Rule" id="MF_00105"/>
    </source>
</evidence>
<proteinExistence type="inferred from homology"/>
<feature type="chain" id="PRO_0000176913" description="Transcription elongation factor GreA">
    <location>
        <begin position="1"/>
        <end position="159"/>
    </location>
</feature>
<feature type="coiled-coil region" evidence="1">
    <location>
        <begin position="7"/>
        <end position="72"/>
    </location>
</feature>
<accession>Q8K9G6</accession>
<gene>
    <name evidence="1" type="primary">greA</name>
    <name type="ordered locus">BUsg_371</name>
</gene>
<sequence length="159" mass="17957">MINLIPMTVRGAEKLREELEQLKNVKRPRITVQIAEARKHGDLKENAEYHSAREEQSFCEGRIQEIESKLSNSQIIDITKISNDGRVVFGSTVTILNIKNNAVFTYQIVGDDESDFKKNLISINSPMSRGLIGKTVNTIAIIHTPSGNVKYKILKIDYI</sequence>
<reference key="1">
    <citation type="journal article" date="2002" name="Science">
        <title>50 million years of genomic stasis in endosymbiotic bacteria.</title>
        <authorList>
            <person name="Tamas I."/>
            <person name="Klasson L."/>
            <person name="Canbaeck B."/>
            <person name="Naeslund A.K."/>
            <person name="Eriksson A.-S."/>
            <person name="Wernegreen J.J."/>
            <person name="Sandstroem J.P."/>
            <person name="Moran N.A."/>
            <person name="Andersson S.G.E."/>
        </authorList>
    </citation>
    <scope>NUCLEOTIDE SEQUENCE [LARGE SCALE GENOMIC DNA]</scope>
    <source>
        <strain>Sg</strain>
    </source>
</reference>
<name>GREA_BUCAP</name>
<comment type="function">
    <text evidence="1">Necessary for efficient RNA polymerase transcription elongation past template-encoded arresting sites. The arresting sites in DNA have the property of trapping a certain fraction of elongating RNA polymerases that pass through, resulting in locked ternary complexes. Cleavage of the nascent transcript by cleavage factors such as GreA or GreB allows the resumption of elongation from the new 3'terminus. GreA releases sequences of 2 to 3 nucleotides.</text>
</comment>
<comment type="similarity">
    <text evidence="1">Belongs to the GreA/GreB family.</text>
</comment>
<organism>
    <name type="scientific">Buchnera aphidicola subsp. Schizaphis graminum (strain Sg)</name>
    <dbReference type="NCBI Taxonomy" id="198804"/>
    <lineage>
        <taxon>Bacteria</taxon>
        <taxon>Pseudomonadati</taxon>
        <taxon>Pseudomonadota</taxon>
        <taxon>Gammaproteobacteria</taxon>
        <taxon>Enterobacterales</taxon>
        <taxon>Erwiniaceae</taxon>
        <taxon>Buchnera</taxon>
    </lineage>
</organism>
<dbReference type="EMBL" id="AE013218">
    <property type="protein sequence ID" value="AAM67923.1"/>
    <property type="molecule type" value="Genomic_DNA"/>
</dbReference>
<dbReference type="RefSeq" id="WP_011053890.1">
    <property type="nucleotide sequence ID" value="NC_004061.1"/>
</dbReference>
<dbReference type="SMR" id="Q8K9G6"/>
<dbReference type="STRING" id="198804.BUsg_371"/>
<dbReference type="GeneID" id="93003841"/>
<dbReference type="KEGG" id="bas:BUsg_371"/>
<dbReference type="eggNOG" id="COG0782">
    <property type="taxonomic scope" value="Bacteria"/>
</dbReference>
<dbReference type="HOGENOM" id="CLU_101379_2_0_6"/>
<dbReference type="Proteomes" id="UP000000416">
    <property type="component" value="Chromosome"/>
</dbReference>
<dbReference type="GO" id="GO:0003677">
    <property type="term" value="F:DNA binding"/>
    <property type="evidence" value="ECO:0007669"/>
    <property type="project" value="UniProtKB-UniRule"/>
</dbReference>
<dbReference type="GO" id="GO:0070063">
    <property type="term" value="F:RNA polymerase binding"/>
    <property type="evidence" value="ECO:0007669"/>
    <property type="project" value="InterPro"/>
</dbReference>
<dbReference type="GO" id="GO:0006354">
    <property type="term" value="P:DNA-templated transcription elongation"/>
    <property type="evidence" value="ECO:0007669"/>
    <property type="project" value="TreeGrafter"/>
</dbReference>
<dbReference type="GO" id="GO:0032784">
    <property type="term" value="P:regulation of DNA-templated transcription elongation"/>
    <property type="evidence" value="ECO:0007669"/>
    <property type="project" value="UniProtKB-UniRule"/>
</dbReference>
<dbReference type="FunFam" id="1.10.287.180:FF:000001">
    <property type="entry name" value="Transcription elongation factor GreA"/>
    <property type="match status" value="1"/>
</dbReference>
<dbReference type="FunFam" id="3.10.50.30:FF:000001">
    <property type="entry name" value="Transcription elongation factor GreA"/>
    <property type="match status" value="1"/>
</dbReference>
<dbReference type="Gene3D" id="3.10.50.30">
    <property type="entry name" value="Transcription elongation factor, GreA/GreB, C-terminal domain"/>
    <property type="match status" value="1"/>
</dbReference>
<dbReference type="Gene3D" id="1.10.287.180">
    <property type="entry name" value="Transcription elongation factor, GreA/GreB, N-terminal domain"/>
    <property type="match status" value="1"/>
</dbReference>
<dbReference type="HAMAP" id="MF_00105">
    <property type="entry name" value="GreA_GreB"/>
    <property type="match status" value="1"/>
</dbReference>
<dbReference type="InterPro" id="IPR036953">
    <property type="entry name" value="GreA/GreB_C_sf"/>
</dbReference>
<dbReference type="InterPro" id="IPR018151">
    <property type="entry name" value="TF_GreA/GreB_CS"/>
</dbReference>
<dbReference type="InterPro" id="IPR006359">
    <property type="entry name" value="Tscrpt_elong_fac_GreA"/>
</dbReference>
<dbReference type="InterPro" id="IPR028624">
    <property type="entry name" value="Tscrpt_elong_fac_GreA/B"/>
</dbReference>
<dbReference type="InterPro" id="IPR001437">
    <property type="entry name" value="Tscrpt_elong_fac_GreA/B_C"/>
</dbReference>
<dbReference type="InterPro" id="IPR023459">
    <property type="entry name" value="Tscrpt_elong_fac_GreA/B_fam"/>
</dbReference>
<dbReference type="InterPro" id="IPR022691">
    <property type="entry name" value="Tscrpt_elong_fac_GreA/B_N"/>
</dbReference>
<dbReference type="InterPro" id="IPR036805">
    <property type="entry name" value="Tscrpt_elong_fac_GreA/B_N_sf"/>
</dbReference>
<dbReference type="NCBIfam" id="TIGR01462">
    <property type="entry name" value="greA"/>
    <property type="match status" value="1"/>
</dbReference>
<dbReference type="NCBIfam" id="NF001261">
    <property type="entry name" value="PRK00226.1-2"/>
    <property type="match status" value="1"/>
</dbReference>
<dbReference type="NCBIfam" id="NF001263">
    <property type="entry name" value="PRK00226.1-4"/>
    <property type="match status" value="1"/>
</dbReference>
<dbReference type="NCBIfam" id="NF001264">
    <property type="entry name" value="PRK00226.1-5"/>
    <property type="match status" value="1"/>
</dbReference>
<dbReference type="PANTHER" id="PTHR30437">
    <property type="entry name" value="TRANSCRIPTION ELONGATION FACTOR GREA"/>
    <property type="match status" value="1"/>
</dbReference>
<dbReference type="PANTHER" id="PTHR30437:SF4">
    <property type="entry name" value="TRANSCRIPTION ELONGATION FACTOR GREA"/>
    <property type="match status" value="1"/>
</dbReference>
<dbReference type="Pfam" id="PF01272">
    <property type="entry name" value="GreA_GreB"/>
    <property type="match status" value="1"/>
</dbReference>
<dbReference type="Pfam" id="PF03449">
    <property type="entry name" value="GreA_GreB_N"/>
    <property type="match status" value="1"/>
</dbReference>
<dbReference type="PIRSF" id="PIRSF006092">
    <property type="entry name" value="GreA_GreB"/>
    <property type="match status" value="1"/>
</dbReference>
<dbReference type="SUPFAM" id="SSF54534">
    <property type="entry name" value="FKBP-like"/>
    <property type="match status" value="1"/>
</dbReference>
<dbReference type="SUPFAM" id="SSF46557">
    <property type="entry name" value="GreA transcript cleavage protein, N-terminal domain"/>
    <property type="match status" value="1"/>
</dbReference>
<dbReference type="PROSITE" id="PS00829">
    <property type="entry name" value="GREAB_1"/>
    <property type="match status" value="1"/>
</dbReference>